<keyword id="KW-0687">Ribonucleoprotein</keyword>
<keyword id="KW-0689">Ribosomal protein</keyword>
<gene>
    <name evidence="1" type="primary">rplS</name>
    <name type="ordered locus">BCQ_3625</name>
</gene>
<comment type="function">
    <text evidence="1">This protein is located at the 30S-50S ribosomal subunit interface and may play a role in the structure and function of the aminoacyl-tRNA binding site.</text>
</comment>
<comment type="similarity">
    <text evidence="1">Belongs to the bacterial ribosomal protein bL19 family.</text>
</comment>
<evidence type="ECO:0000255" key="1">
    <source>
        <dbReference type="HAMAP-Rule" id="MF_00402"/>
    </source>
</evidence>
<evidence type="ECO:0000305" key="2"/>
<name>RL19_BACCQ</name>
<organism>
    <name type="scientific">Bacillus cereus (strain Q1)</name>
    <dbReference type="NCBI Taxonomy" id="361100"/>
    <lineage>
        <taxon>Bacteria</taxon>
        <taxon>Bacillati</taxon>
        <taxon>Bacillota</taxon>
        <taxon>Bacilli</taxon>
        <taxon>Bacillales</taxon>
        <taxon>Bacillaceae</taxon>
        <taxon>Bacillus</taxon>
        <taxon>Bacillus cereus group</taxon>
    </lineage>
</organism>
<dbReference type="EMBL" id="CP000227">
    <property type="protein sequence ID" value="ACM14053.1"/>
    <property type="molecule type" value="Genomic_DNA"/>
</dbReference>
<dbReference type="SMR" id="B9IVC9"/>
<dbReference type="KEGG" id="bcq:BCQ_3625"/>
<dbReference type="HOGENOM" id="CLU_103507_2_1_9"/>
<dbReference type="Proteomes" id="UP000000441">
    <property type="component" value="Chromosome"/>
</dbReference>
<dbReference type="GO" id="GO:0022625">
    <property type="term" value="C:cytosolic large ribosomal subunit"/>
    <property type="evidence" value="ECO:0007669"/>
    <property type="project" value="TreeGrafter"/>
</dbReference>
<dbReference type="GO" id="GO:0003735">
    <property type="term" value="F:structural constituent of ribosome"/>
    <property type="evidence" value="ECO:0007669"/>
    <property type="project" value="InterPro"/>
</dbReference>
<dbReference type="GO" id="GO:0006412">
    <property type="term" value="P:translation"/>
    <property type="evidence" value="ECO:0007669"/>
    <property type="project" value="UniProtKB-UniRule"/>
</dbReference>
<dbReference type="FunFam" id="2.30.30.790:FF:000001">
    <property type="entry name" value="50S ribosomal protein L19"/>
    <property type="match status" value="1"/>
</dbReference>
<dbReference type="Gene3D" id="2.30.30.790">
    <property type="match status" value="1"/>
</dbReference>
<dbReference type="HAMAP" id="MF_00402">
    <property type="entry name" value="Ribosomal_bL19"/>
    <property type="match status" value="1"/>
</dbReference>
<dbReference type="InterPro" id="IPR001857">
    <property type="entry name" value="Ribosomal_bL19"/>
</dbReference>
<dbReference type="InterPro" id="IPR018257">
    <property type="entry name" value="Ribosomal_bL19_CS"/>
</dbReference>
<dbReference type="InterPro" id="IPR038657">
    <property type="entry name" value="Ribosomal_bL19_sf"/>
</dbReference>
<dbReference type="InterPro" id="IPR008991">
    <property type="entry name" value="Translation_prot_SH3-like_sf"/>
</dbReference>
<dbReference type="NCBIfam" id="TIGR01024">
    <property type="entry name" value="rplS_bact"/>
    <property type="match status" value="1"/>
</dbReference>
<dbReference type="PANTHER" id="PTHR15680:SF9">
    <property type="entry name" value="LARGE RIBOSOMAL SUBUNIT PROTEIN BL19M"/>
    <property type="match status" value="1"/>
</dbReference>
<dbReference type="PANTHER" id="PTHR15680">
    <property type="entry name" value="RIBOSOMAL PROTEIN L19"/>
    <property type="match status" value="1"/>
</dbReference>
<dbReference type="Pfam" id="PF01245">
    <property type="entry name" value="Ribosomal_L19"/>
    <property type="match status" value="1"/>
</dbReference>
<dbReference type="PIRSF" id="PIRSF002191">
    <property type="entry name" value="Ribosomal_L19"/>
    <property type="match status" value="1"/>
</dbReference>
<dbReference type="PRINTS" id="PR00061">
    <property type="entry name" value="RIBOSOMALL19"/>
</dbReference>
<dbReference type="SUPFAM" id="SSF50104">
    <property type="entry name" value="Translation proteins SH3-like domain"/>
    <property type="match status" value="1"/>
</dbReference>
<dbReference type="PROSITE" id="PS01015">
    <property type="entry name" value="RIBOSOMAL_L19"/>
    <property type="match status" value="1"/>
</dbReference>
<proteinExistence type="inferred from homology"/>
<sequence>MQQLIAEITKGQLKTDLPSFRPGDTLRVHVKVVEGTRERIQLFEGVVIKRRGGGISETFTVRKISYGVGVERTFPVHTPRIAKIEVLRRGKVRRAKLYYLRNLRGKKARIKEIR</sequence>
<accession>B9IVC9</accession>
<reference key="1">
    <citation type="journal article" date="2009" name="J. Bacteriol.">
        <title>Complete genome sequence of the extremophilic Bacillus cereus strain Q1 with industrial applications.</title>
        <authorList>
            <person name="Xiong Z."/>
            <person name="Jiang Y."/>
            <person name="Qi D."/>
            <person name="Lu H."/>
            <person name="Yang F."/>
            <person name="Yang J."/>
            <person name="Chen L."/>
            <person name="Sun L."/>
            <person name="Xu X."/>
            <person name="Xue Y."/>
            <person name="Zhu Y."/>
            <person name="Jin Q."/>
        </authorList>
    </citation>
    <scope>NUCLEOTIDE SEQUENCE [LARGE SCALE GENOMIC DNA]</scope>
    <source>
        <strain>Q1</strain>
    </source>
</reference>
<protein>
    <recommendedName>
        <fullName evidence="1">Large ribosomal subunit protein bL19</fullName>
    </recommendedName>
    <alternativeName>
        <fullName evidence="2">50S ribosomal protein L19</fullName>
    </alternativeName>
</protein>
<feature type="chain" id="PRO_1000134556" description="Large ribosomal subunit protein bL19">
    <location>
        <begin position="1"/>
        <end position="114"/>
    </location>
</feature>